<organism>
    <name type="scientific">Chlamydia pneumoniae</name>
    <name type="common">Chlamydophila pneumoniae</name>
    <dbReference type="NCBI Taxonomy" id="83558"/>
    <lineage>
        <taxon>Bacteria</taxon>
        <taxon>Pseudomonadati</taxon>
        <taxon>Chlamydiota</taxon>
        <taxon>Chlamydiia</taxon>
        <taxon>Chlamydiales</taxon>
        <taxon>Chlamydiaceae</taxon>
        <taxon>Chlamydia/Chlamydophila group</taxon>
        <taxon>Chlamydia</taxon>
    </lineage>
</organism>
<proteinExistence type="inferred from homology"/>
<dbReference type="EC" id="6.1.1.14"/>
<dbReference type="EMBL" id="AE001363">
    <property type="protein sequence ID" value="AAD19084.1"/>
    <property type="status" value="ALT_INIT"/>
    <property type="molecule type" value="Genomic_DNA"/>
</dbReference>
<dbReference type="EMBL" id="AE002161">
    <property type="protein sequence ID" value="AAF38698.1"/>
    <property type="molecule type" value="Genomic_DNA"/>
</dbReference>
<dbReference type="EMBL" id="BA000008">
    <property type="protein sequence ID" value="BAA99154.1"/>
    <property type="status" value="ALT_INIT"/>
    <property type="molecule type" value="Genomic_DNA"/>
</dbReference>
<dbReference type="EMBL" id="AE009440">
    <property type="protein sequence ID" value="AAP98910.1"/>
    <property type="molecule type" value="Genomic_DNA"/>
</dbReference>
<dbReference type="PIR" id="A72016">
    <property type="entry name" value="A72016"/>
</dbReference>
<dbReference type="PIR" id="C81524">
    <property type="entry name" value="C81524"/>
</dbReference>
<dbReference type="PIR" id="H86608">
    <property type="entry name" value="H86608"/>
</dbReference>
<dbReference type="RefSeq" id="NP_225141.1">
    <property type="nucleotide sequence ID" value="NC_000922.1"/>
</dbReference>
<dbReference type="SMR" id="Q9Z6W0"/>
<dbReference type="STRING" id="406984.CPK_ORF00360"/>
<dbReference type="KEGG" id="cpa:CP_0913"/>
<dbReference type="KEGG" id="cpj:glyQ"/>
<dbReference type="KEGG" id="cpn:CPn_0946"/>
<dbReference type="KEGG" id="cpt:CpB0981"/>
<dbReference type="PATRIC" id="fig|115713.3.peg.1035"/>
<dbReference type="eggNOG" id="COG0751">
    <property type="taxonomic scope" value="Bacteria"/>
</dbReference>
<dbReference type="eggNOG" id="COG0752">
    <property type="taxonomic scope" value="Bacteria"/>
</dbReference>
<dbReference type="HOGENOM" id="CLU_007220_1_1_0"/>
<dbReference type="Proteomes" id="UP000000583">
    <property type="component" value="Chromosome"/>
</dbReference>
<dbReference type="Proteomes" id="UP000000801">
    <property type="component" value="Chromosome"/>
</dbReference>
<dbReference type="GO" id="GO:0005829">
    <property type="term" value="C:cytosol"/>
    <property type="evidence" value="ECO:0007669"/>
    <property type="project" value="TreeGrafter"/>
</dbReference>
<dbReference type="GO" id="GO:0005524">
    <property type="term" value="F:ATP binding"/>
    <property type="evidence" value="ECO:0007669"/>
    <property type="project" value="UniProtKB-UniRule"/>
</dbReference>
<dbReference type="GO" id="GO:0004820">
    <property type="term" value="F:glycine-tRNA ligase activity"/>
    <property type="evidence" value="ECO:0000250"/>
    <property type="project" value="UniProtKB"/>
</dbReference>
<dbReference type="GO" id="GO:0046983">
    <property type="term" value="F:protein dimerization activity"/>
    <property type="evidence" value="ECO:0000250"/>
    <property type="project" value="UniProtKB"/>
</dbReference>
<dbReference type="GO" id="GO:0006426">
    <property type="term" value="P:glycyl-tRNA aminoacylation"/>
    <property type="evidence" value="ECO:0007669"/>
    <property type="project" value="UniProtKB-UniRule"/>
</dbReference>
<dbReference type="CDD" id="cd00733">
    <property type="entry name" value="GlyRS_alpha_core"/>
    <property type="match status" value="1"/>
</dbReference>
<dbReference type="FunFam" id="3.30.930.10:FF:000006">
    <property type="entry name" value="Glycine--tRNA ligase alpha subunit"/>
    <property type="match status" value="1"/>
</dbReference>
<dbReference type="Gene3D" id="3.30.930.10">
    <property type="entry name" value="Bira Bifunctional Protein, Domain 2"/>
    <property type="match status" value="1"/>
</dbReference>
<dbReference type="Gene3D" id="1.20.58.180">
    <property type="entry name" value="Class II aaRS and biotin synthetases, domain 2"/>
    <property type="match status" value="1"/>
</dbReference>
<dbReference type="HAMAP" id="MF_00254">
    <property type="entry name" value="Gly_tRNA_synth_alpha"/>
    <property type="match status" value="1"/>
</dbReference>
<dbReference type="HAMAP" id="MF_00255">
    <property type="entry name" value="Gly_tRNA_synth_beta"/>
    <property type="match status" value="1"/>
</dbReference>
<dbReference type="InterPro" id="IPR045864">
    <property type="entry name" value="aa-tRNA-synth_II/BPL/LPL"/>
</dbReference>
<dbReference type="InterPro" id="IPR015944">
    <property type="entry name" value="Gly-tRNA-synth_bsu"/>
</dbReference>
<dbReference type="InterPro" id="IPR006194">
    <property type="entry name" value="Gly-tRNA-synth_heterodimer"/>
</dbReference>
<dbReference type="InterPro" id="IPR002310">
    <property type="entry name" value="Gly-tRNA_ligase_asu"/>
</dbReference>
<dbReference type="NCBIfam" id="TIGR00388">
    <property type="entry name" value="glyQ"/>
    <property type="match status" value="1"/>
</dbReference>
<dbReference type="NCBIfam" id="TIGR00211">
    <property type="entry name" value="glyS"/>
    <property type="match status" value="1"/>
</dbReference>
<dbReference type="NCBIfam" id="NF006827">
    <property type="entry name" value="PRK09348.1"/>
    <property type="match status" value="1"/>
</dbReference>
<dbReference type="NCBIfam" id="NF011499">
    <property type="entry name" value="PRK14908.1"/>
    <property type="match status" value="1"/>
</dbReference>
<dbReference type="PANTHER" id="PTHR30075:SF2">
    <property type="entry name" value="GLYCINE--TRNA LIGASE, CHLOROPLASTIC_MITOCHONDRIAL 2"/>
    <property type="match status" value="1"/>
</dbReference>
<dbReference type="PANTHER" id="PTHR30075">
    <property type="entry name" value="GLYCYL-TRNA SYNTHETASE"/>
    <property type="match status" value="1"/>
</dbReference>
<dbReference type="Pfam" id="PF02091">
    <property type="entry name" value="tRNA-synt_2e"/>
    <property type="match status" value="1"/>
</dbReference>
<dbReference type="Pfam" id="PF02092">
    <property type="entry name" value="tRNA_synt_2f"/>
    <property type="match status" value="1"/>
</dbReference>
<dbReference type="PRINTS" id="PR01044">
    <property type="entry name" value="TRNASYNTHGA"/>
</dbReference>
<dbReference type="SUPFAM" id="SSF55681">
    <property type="entry name" value="Class II aaRS and biotin synthetases"/>
    <property type="match status" value="1"/>
</dbReference>
<dbReference type="PROSITE" id="PS50861">
    <property type="entry name" value="AA_TRNA_LIGASE_II_GLYAB"/>
    <property type="match status" value="2"/>
</dbReference>
<feature type="chain" id="PRO_0000072889" description="Glycine--tRNA ligase">
    <location>
        <begin position="1"/>
        <end position="1010"/>
    </location>
</feature>
<feature type="region of interest" description="Glycine--tRNA ligase alpha subunit">
    <location>
        <begin position="1"/>
        <end position="312"/>
    </location>
</feature>
<feature type="region of interest" description="Glycine--tRNA ligase beta subunit">
    <location>
        <begin position="313"/>
        <end position="1010"/>
    </location>
</feature>
<feature type="sequence conflict" description="In Ref. 1; AAD19084." evidence="2" ref="1">
    <original>T</original>
    <variation>I</variation>
    <location>
        <position position="177"/>
    </location>
</feature>
<sequence length="1010" mass="114032">MSEHPLTLQSMIATILRFWSEQGCVIHQGYDLEVGAGTFNPATFLRALGPEPYKAAYVEPSRRPQDGRYGVHPNRLQNYHQLQVILKPVPENFLSLYTESLRAIGLDLRDHDIRFIHDDWENPTIGAWGLGWEVWLNGMEITQLTYFQAIGSKPLDTISGEITYGIERIAMYLQKKTSIYDVLWNDTLTYGQITQASEKAWSEYNFDYANTEMWFKHFEDFAEEALRTLKNGLSVPAYDFVIKASHAFNILDARGTISVTERTRYIARIRQLTRLVADSYVEWRASLNYPLLSLSSTSEPKETSESVVPMISSTEDLLLEIGSEELPATFVPIGIQQLESLARQVLTDHNIVYEGLEVLGSPRRLALLVKNVAPEVVQKAFEKKGPMLTSLFSPDGDVSPQGQQFFASQGVDISHYQDLSRHASLAIRTVNGSEYLFLLHPEIRLRTADILMQELPLLIQRMKFPKKMVWDNSGVEYARPIRWLVALYGEHILPITLGTIIASRNSFGHRQLDPRKISISSPQDYVETLRQACVVVSQKERRMIIEQGLRAHSSDTISAIPLPRLIEEATFLSEHPFVSCGQFSEQFCALPKELLIAEMVNHQKYFPTHETSSGAISNFFIVVCDNSPNDTIIEGNEKALTPRLTDGEFLFKQDLQTPLTTFIEKLKSVTYFEALGSLYDKVERLKAHQRVFSTFSSLAASEDLDIAIQYCKADLVSAVVNEFPELQGIMGEYYLKHANLPTASAVAVGEHLRHITMGQKLSTIGTLLSLLDRLDNLLACFILGLKPTSSHDPYALRRQSLEVLTLVSASRLPIDLASLLDRLADHFPSTIEEKVWDKSKTIHEILEFIWGRLKTFMGSLEFRKDEIAAVLIDSATKNPIEILDTAEALQLLKEEHTEKLAVITTTHNRLKKILSSLKLSMTSSPIEVLGDRESNFKQVLDAFPGFPKETSAHAFLEYFLSLADLSNDIQDFLNTVHIANDDGAIRNLRISLLLTAMDKFSLCHWESVAV</sequence>
<accession>Q9Z6W0</accession>
<accession>Q9JS87</accession>
<accession>Q9K1V6</accession>
<comment type="catalytic activity">
    <reaction>
        <text>tRNA(Gly) + glycine + ATP = glycyl-tRNA(Gly) + AMP + diphosphate</text>
        <dbReference type="Rhea" id="RHEA:16013"/>
        <dbReference type="Rhea" id="RHEA-COMP:9664"/>
        <dbReference type="Rhea" id="RHEA-COMP:9683"/>
        <dbReference type="ChEBI" id="CHEBI:30616"/>
        <dbReference type="ChEBI" id="CHEBI:33019"/>
        <dbReference type="ChEBI" id="CHEBI:57305"/>
        <dbReference type="ChEBI" id="CHEBI:78442"/>
        <dbReference type="ChEBI" id="CHEBI:78522"/>
        <dbReference type="ChEBI" id="CHEBI:456215"/>
        <dbReference type="EC" id="6.1.1.14"/>
    </reaction>
</comment>
<comment type="subcellular location">
    <subcellularLocation>
        <location evidence="1">Cytoplasm</location>
    </subcellularLocation>
</comment>
<comment type="similarity">
    <text evidence="2">Belongs to the class-II aminoacyl-tRNA synthetase family.</text>
</comment>
<comment type="sequence caution" evidence="2">
    <conflict type="erroneous initiation">
        <sequence resource="EMBL-CDS" id="AAD19084"/>
    </conflict>
</comment>
<comment type="sequence caution" evidence="2">
    <conflict type="erroneous initiation">
        <sequence resource="EMBL-CDS" id="BAA99154"/>
    </conflict>
</comment>
<protein>
    <recommendedName>
        <fullName>Glycine--tRNA ligase</fullName>
    </recommendedName>
    <alternativeName>
        <fullName>Glycyl-tRNA synthetase</fullName>
        <shortName>GlyRS</shortName>
        <ecNumber>6.1.1.14</ecNumber>
    </alternativeName>
    <domain>
        <recommendedName>
            <fullName>Glycine--tRNA ligase alpha subunit</fullName>
        </recommendedName>
        <alternativeName>
            <fullName>Glycyl-tRNA synthetase alpha subunit</fullName>
        </alternativeName>
    </domain>
    <domain>
        <recommendedName>
            <fullName>Glycine--tRNA ligase beta subunit</fullName>
        </recommendedName>
        <alternativeName>
            <fullName>Glycyl-tRNA synthetase beta subunit</fullName>
        </alternativeName>
    </domain>
</protein>
<keyword id="KW-0030">Aminoacyl-tRNA synthetase</keyword>
<keyword id="KW-0067">ATP-binding</keyword>
<keyword id="KW-0963">Cytoplasm</keyword>
<keyword id="KW-0436">Ligase</keyword>
<keyword id="KW-0547">Nucleotide-binding</keyword>
<keyword id="KW-0648">Protein biosynthesis</keyword>
<reference key="1">
    <citation type="journal article" date="1999" name="Nat. Genet.">
        <title>Comparative genomes of Chlamydia pneumoniae and C. trachomatis.</title>
        <authorList>
            <person name="Kalman S."/>
            <person name="Mitchell W.P."/>
            <person name="Marathe R."/>
            <person name="Lammel C.J."/>
            <person name="Fan J."/>
            <person name="Hyman R.W."/>
            <person name="Olinger L."/>
            <person name="Grimwood J."/>
            <person name="Davis R.W."/>
            <person name="Stephens R.S."/>
        </authorList>
    </citation>
    <scope>NUCLEOTIDE SEQUENCE [LARGE SCALE GENOMIC DNA]</scope>
    <source>
        <strain>CWL029</strain>
    </source>
</reference>
<reference key="2">
    <citation type="journal article" date="2000" name="Nucleic Acids Res.">
        <title>Genome sequences of Chlamydia trachomatis MoPn and Chlamydia pneumoniae AR39.</title>
        <authorList>
            <person name="Read T.D."/>
            <person name="Brunham R.C."/>
            <person name="Shen C."/>
            <person name="Gill S.R."/>
            <person name="Heidelberg J.F."/>
            <person name="White O."/>
            <person name="Hickey E.K."/>
            <person name="Peterson J.D."/>
            <person name="Utterback T.R."/>
            <person name="Berry K.J."/>
            <person name="Bass S."/>
            <person name="Linher K.D."/>
            <person name="Weidman J.F."/>
            <person name="Khouri H.M."/>
            <person name="Craven B."/>
            <person name="Bowman C."/>
            <person name="Dodson R.J."/>
            <person name="Gwinn M.L."/>
            <person name="Nelson W.C."/>
            <person name="DeBoy R.T."/>
            <person name="Kolonay J.F."/>
            <person name="McClarty G."/>
            <person name="Salzberg S.L."/>
            <person name="Eisen J.A."/>
            <person name="Fraser C.M."/>
        </authorList>
    </citation>
    <scope>NUCLEOTIDE SEQUENCE [LARGE SCALE GENOMIC DNA]</scope>
    <source>
        <strain>AR39</strain>
    </source>
</reference>
<reference key="3">
    <citation type="journal article" date="2000" name="Nucleic Acids Res.">
        <title>Comparison of whole genome sequences of Chlamydia pneumoniae J138 from Japan and CWL029 from USA.</title>
        <authorList>
            <person name="Shirai M."/>
            <person name="Hirakawa H."/>
            <person name="Kimoto M."/>
            <person name="Tabuchi M."/>
            <person name="Kishi F."/>
            <person name="Ouchi K."/>
            <person name="Shiba T."/>
            <person name="Ishii K."/>
            <person name="Hattori M."/>
            <person name="Kuhara S."/>
            <person name="Nakazawa T."/>
        </authorList>
    </citation>
    <scope>NUCLEOTIDE SEQUENCE [LARGE SCALE GENOMIC DNA]</scope>
    <source>
        <strain>J138</strain>
    </source>
</reference>
<reference key="4">
    <citation type="submission" date="2002-05" db="EMBL/GenBank/DDBJ databases">
        <title>The genome sequence of Chlamydia pneumoniae TW183 and comparison with other Chlamydia strains based on whole genome sequence analysis.</title>
        <authorList>
            <person name="Geng M.M."/>
            <person name="Schuhmacher A."/>
            <person name="Muehldorfer I."/>
            <person name="Bensch K.W."/>
            <person name="Schaefer K.P."/>
            <person name="Schneider S."/>
            <person name="Pohl T."/>
            <person name="Essig A."/>
            <person name="Marre R."/>
            <person name="Melchers K."/>
        </authorList>
    </citation>
    <scope>NUCLEOTIDE SEQUENCE [LARGE SCALE GENOMIC DNA]</scope>
    <source>
        <strain>TW-183</strain>
    </source>
</reference>
<gene>
    <name type="primary">glyQS</name>
    <name type="synonym">glyQ</name>
    <name type="ordered locus">CPn_0946</name>
    <name type="ordered locus">CP_0913</name>
    <name type="ordered locus">CpB0981</name>
</gene>
<evidence type="ECO:0000250" key="1"/>
<evidence type="ECO:0000305" key="2"/>
<name>SYG_CHLPN</name>